<name>UVRB_PSESM</name>
<accession>Q884C9</accession>
<evidence type="ECO:0000255" key="1">
    <source>
        <dbReference type="HAMAP-Rule" id="MF_00204"/>
    </source>
</evidence>
<evidence type="ECO:0000256" key="2">
    <source>
        <dbReference type="SAM" id="MobiDB-lite"/>
    </source>
</evidence>
<reference key="1">
    <citation type="journal article" date="2003" name="Proc. Natl. Acad. Sci. U.S.A.">
        <title>The complete genome sequence of the Arabidopsis and tomato pathogen Pseudomonas syringae pv. tomato DC3000.</title>
        <authorList>
            <person name="Buell C.R."/>
            <person name="Joardar V."/>
            <person name="Lindeberg M."/>
            <person name="Selengut J."/>
            <person name="Paulsen I.T."/>
            <person name="Gwinn M.L."/>
            <person name="Dodson R.J."/>
            <person name="DeBoy R.T."/>
            <person name="Durkin A.S."/>
            <person name="Kolonay J.F."/>
            <person name="Madupu R."/>
            <person name="Daugherty S.C."/>
            <person name="Brinkac L.M."/>
            <person name="Beanan M.J."/>
            <person name="Haft D.H."/>
            <person name="Nelson W.C."/>
            <person name="Davidsen T.M."/>
            <person name="Zafar N."/>
            <person name="Zhou L."/>
            <person name="Liu J."/>
            <person name="Yuan Q."/>
            <person name="Khouri H.M."/>
            <person name="Fedorova N.B."/>
            <person name="Tran B."/>
            <person name="Russell D."/>
            <person name="Berry K.J."/>
            <person name="Utterback T.R."/>
            <person name="Van Aken S.E."/>
            <person name="Feldblyum T.V."/>
            <person name="D'Ascenzo M."/>
            <person name="Deng W.-L."/>
            <person name="Ramos A.R."/>
            <person name="Alfano J.R."/>
            <person name="Cartinhour S."/>
            <person name="Chatterjee A.K."/>
            <person name="Delaney T.P."/>
            <person name="Lazarowitz S.G."/>
            <person name="Martin G.B."/>
            <person name="Schneider D.J."/>
            <person name="Tang X."/>
            <person name="Bender C.L."/>
            <person name="White O."/>
            <person name="Fraser C.M."/>
            <person name="Collmer A."/>
        </authorList>
    </citation>
    <scope>NUCLEOTIDE SEQUENCE [LARGE SCALE GENOMIC DNA]</scope>
    <source>
        <strain>ATCC BAA-871 / DC3000</strain>
    </source>
</reference>
<comment type="function">
    <text evidence="1">The UvrABC repair system catalyzes the recognition and processing of DNA lesions. A damage recognition complex composed of 2 UvrA and 2 UvrB subunits scans DNA for abnormalities. Upon binding of the UvrA(2)B(2) complex to a putative damaged site, the DNA wraps around one UvrB monomer. DNA wrap is dependent on ATP binding by UvrB and probably causes local melting of the DNA helix, facilitating insertion of UvrB beta-hairpin between the DNA strands. Then UvrB probes one DNA strand for the presence of a lesion. If a lesion is found the UvrA subunits dissociate and the UvrB-DNA preincision complex is formed. This complex is subsequently bound by UvrC and the second UvrB is released. If no lesion is found, the DNA wraps around the other UvrB subunit that will check the other stand for damage.</text>
</comment>
<comment type="subunit">
    <text evidence="1">Forms a heterotetramer with UvrA during the search for lesions. Interacts with UvrC in an incision complex.</text>
</comment>
<comment type="subcellular location">
    <subcellularLocation>
        <location evidence="1">Cytoplasm</location>
    </subcellularLocation>
</comment>
<comment type="domain">
    <text evidence="1">The beta-hairpin motif is involved in DNA binding.</text>
</comment>
<comment type="similarity">
    <text evidence="1">Belongs to the UvrB family.</text>
</comment>
<proteinExistence type="inferred from homology"/>
<protein>
    <recommendedName>
        <fullName evidence="1">UvrABC system protein B</fullName>
        <shortName evidence="1">Protein UvrB</shortName>
    </recommendedName>
    <alternativeName>
        <fullName evidence="1">Excinuclease ABC subunit B</fullName>
    </alternativeName>
</protein>
<organism>
    <name type="scientific">Pseudomonas syringae pv. tomato (strain ATCC BAA-871 / DC3000)</name>
    <dbReference type="NCBI Taxonomy" id="223283"/>
    <lineage>
        <taxon>Bacteria</taxon>
        <taxon>Pseudomonadati</taxon>
        <taxon>Pseudomonadota</taxon>
        <taxon>Gammaproteobacteria</taxon>
        <taxon>Pseudomonadales</taxon>
        <taxon>Pseudomonadaceae</taxon>
        <taxon>Pseudomonas</taxon>
    </lineage>
</organism>
<sequence>MSEFQLVTRFEPAGDQPEAIRQLVEGIDAGLAHQTLLGVTGSGKTFSIANVISQIKRPTLVLAPNKTLAAQLYGEFKAFFPNNAVEYFVSYYDYYQPEAYVPSSDTFIEKDASINDHIEQMRLSATKALLERKDAIIVTTVSCIYGLGSPETYLRMVLHVDRGDKLDQRALLRRLADLQYTRNDMDFARATFRVRGDVIDIYPAESDLEAIRIELFDDEVESLSAFDPLTGEVIRKLPRFTFYPKSHYVTPRETLVEAMEGIKVELQERLEYLRSQNKLVEAQRLEQRTRFDLEMMLELGYCNGIENYSRYLSGRPSGAPPPTLFDYLPADALLVIDESHVSVPQVGAMYKGDRSRKETLVEYGFRLPSALDNRPMRFDEWEAISPQTIFVSATPGNYEAEHAGRIVEQVVRPTGLVDPQIEIRPALTQVDDLLSEIHKRAALEERVLVTTLTKRMSEDLTDYLSDHGVRVRYLHSDIDTVERVEIIRDLRLGTFDVLVGINLLREGLDMPEVSLVAILDADKEGFLRSDRSLIQTIGRAARNLNGRAILYADRITGSMERAIGETERRREKQIAFNLEHGITPKGVFKDVADIMEGATVPGSRSKKRKGMAKAAEESARYENELRSPSEINKRIRQLEEKMYQLARDLEFEAAAQMRDEIGKLRERLLAV</sequence>
<keyword id="KW-0067">ATP-binding</keyword>
<keyword id="KW-0963">Cytoplasm</keyword>
<keyword id="KW-0227">DNA damage</keyword>
<keyword id="KW-0228">DNA excision</keyword>
<keyword id="KW-0234">DNA repair</keyword>
<keyword id="KW-0267">Excision nuclease</keyword>
<keyword id="KW-0547">Nucleotide-binding</keyword>
<keyword id="KW-1185">Reference proteome</keyword>
<keyword id="KW-0742">SOS response</keyword>
<gene>
    <name evidence="1" type="primary">uvrB</name>
    <name type="ordered locus">PSPTO_2164</name>
</gene>
<dbReference type="EMBL" id="AE016853">
    <property type="protein sequence ID" value="AAO55681.1"/>
    <property type="molecule type" value="Genomic_DNA"/>
</dbReference>
<dbReference type="RefSeq" id="NP_791986.1">
    <property type="nucleotide sequence ID" value="NC_004578.1"/>
</dbReference>
<dbReference type="RefSeq" id="WP_005769676.1">
    <property type="nucleotide sequence ID" value="NC_004578.1"/>
</dbReference>
<dbReference type="SMR" id="Q884C9"/>
<dbReference type="STRING" id="223283.PSPTO_2164"/>
<dbReference type="GeneID" id="1183811"/>
<dbReference type="KEGG" id="pst:PSPTO_2164"/>
<dbReference type="PATRIC" id="fig|223283.9.peg.2195"/>
<dbReference type="eggNOG" id="COG0556">
    <property type="taxonomic scope" value="Bacteria"/>
</dbReference>
<dbReference type="HOGENOM" id="CLU_009621_2_1_6"/>
<dbReference type="OrthoDB" id="9806651at2"/>
<dbReference type="PhylomeDB" id="Q884C9"/>
<dbReference type="Proteomes" id="UP000002515">
    <property type="component" value="Chromosome"/>
</dbReference>
<dbReference type="GO" id="GO:0005737">
    <property type="term" value="C:cytoplasm"/>
    <property type="evidence" value="ECO:0007669"/>
    <property type="project" value="UniProtKB-SubCell"/>
</dbReference>
<dbReference type="GO" id="GO:0009380">
    <property type="term" value="C:excinuclease repair complex"/>
    <property type="evidence" value="ECO:0007669"/>
    <property type="project" value="InterPro"/>
</dbReference>
<dbReference type="GO" id="GO:0005524">
    <property type="term" value="F:ATP binding"/>
    <property type="evidence" value="ECO:0007669"/>
    <property type="project" value="UniProtKB-UniRule"/>
</dbReference>
<dbReference type="GO" id="GO:0016887">
    <property type="term" value="F:ATP hydrolysis activity"/>
    <property type="evidence" value="ECO:0007669"/>
    <property type="project" value="InterPro"/>
</dbReference>
<dbReference type="GO" id="GO:0003677">
    <property type="term" value="F:DNA binding"/>
    <property type="evidence" value="ECO:0007669"/>
    <property type="project" value="UniProtKB-UniRule"/>
</dbReference>
<dbReference type="GO" id="GO:0009381">
    <property type="term" value="F:excinuclease ABC activity"/>
    <property type="evidence" value="ECO:0007669"/>
    <property type="project" value="UniProtKB-UniRule"/>
</dbReference>
<dbReference type="GO" id="GO:0006289">
    <property type="term" value="P:nucleotide-excision repair"/>
    <property type="evidence" value="ECO:0007669"/>
    <property type="project" value="UniProtKB-UniRule"/>
</dbReference>
<dbReference type="GO" id="GO:0009432">
    <property type="term" value="P:SOS response"/>
    <property type="evidence" value="ECO:0007669"/>
    <property type="project" value="UniProtKB-UniRule"/>
</dbReference>
<dbReference type="CDD" id="cd17916">
    <property type="entry name" value="DEXHc_UvrB"/>
    <property type="match status" value="1"/>
</dbReference>
<dbReference type="CDD" id="cd18790">
    <property type="entry name" value="SF2_C_UvrB"/>
    <property type="match status" value="1"/>
</dbReference>
<dbReference type="FunFam" id="3.40.50.300:FF:000257">
    <property type="entry name" value="UvrABC system protein B"/>
    <property type="match status" value="1"/>
</dbReference>
<dbReference type="FunFam" id="3.40.50.300:FF:000477">
    <property type="entry name" value="UvrABC system protein B"/>
    <property type="match status" value="1"/>
</dbReference>
<dbReference type="Gene3D" id="6.10.140.240">
    <property type="match status" value="1"/>
</dbReference>
<dbReference type="Gene3D" id="3.40.50.300">
    <property type="entry name" value="P-loop containing nucleotide triphosphate hydrolases"/>
    <property type="match status" value="3"/>
</dbReference>
<dbReference type="Gene3D" id="4.10.860.10">
    <property type="entry name" value="UVR domain"/>
    <property type="match status" value="1"/>
</dbReference>
<dbReference type="HAMAP" id="MF_00204">
    <property type="entry name" value="UvrB"/>
    <property type="match status" value="1"/>
</dbReference>
<dbReference type="InterPro" id="IPR006935">
    <property type="entry name" value="Helicase/UvrB_N"/>
</dbReference>
<dbReference type="InterPro" id="IPR014001">
    <property type="entry name" value="Helicase_ATP-bd"/>
</dbReference>
<dbReference type="InterPro" id="IPR001650">
    <property type="entry name" value="Helicase_C-like"/>
</dbReference>
<dbReference type="InterPro" id="IPR027417">
    <property type="entry name" value="P-loop_NTPase"/>
</dbReference>
<dbReference type="InterPro" id="IPR001943">
    <property type="entry name" value="UVR_dom"/>
</dbReference>
<dbReference type="InterPro" id="IPR036876">
    <property type="entry name" value="UVR_dom_sf"/>
</dbReference>
<dbReference type="InterPro" id="IPR004807">
    <property type="entry name" value="UvrB"/>
</dbReference>
<dbReference type="InterPro" id="IPR041471">
    <property type="entry name" value="UvrB_inter"/>
</dbReference>
<dbReference type="InterPro" id="IPR024759">
    <property type="entry name" value="UvrB_YAD/RRR_dom"/>
</dbReference>
<dbReference type="NCBIfam" id="NF003673">
    <property type="entry name" value="PRK05298.1"/>
    <property type="match status" value="1"/>
</dbReference>
<dbReference type="NCBIfam" id="TIGR00631">
    <property type="entry name" value="uvrb"/>
    <property type="match status" value="1"/>
</dbReference>
<dbReference type="PANTHER" id="PTHR24029">
    <property type="entry name" value="UVRABC SYSTEM PROTEIN B"/>
    <property type="match status" value="1"/>
</dbReference>
<dbReference type="PANTHER" id="PTHR24029:SF0">
    <property type="entry name" value="UVRABC SYSTEM PROTEIN B"/>
    <property type="match status" value="1"/>
</dbReference>
<dbReference type="Pfam" id="PF00271">
    <property type="entry name" value="Helicase_C"/>
    <property type="match status" value="1"/>
</dbReference>
<dbReference type="Pfam" id="PF04851">
    <property type="entry name" value="ResIII"/>
    <property type="match status" value="1"/>
</dbReference>
<dbReference type="Pfam" id="PF02151">
    <property type="entry name" value="UVR"/>
    <property type="match status" value="1"/>
</dbReference>
<dbReference type="Pfam" id="PF12344">
    <property type="entry name" value="UvrB"/>
    <property type="match status" value="1"/>
</dbReference>
<dbReference type="Pfam" id="PF17757">
    <property type="entry name" value="UvrB_inter"/>
    <property type="match status" value="1"/>
</dbReference>
<dbReference type="SMART" id="SM00487">
    <property type="entry name" value="DEXDc"/>
    <property type="match status" value="1"/>
</dbReference>
<dbReference type="SMART" id="SM00490">
    <property type="entry name" value="HELICc"/>
    <property type="match status" value="1"/>
</dbReference>
<dbReference type="SUPFAM" id="SSF46600">
    <property type="entry name" value="C-terminal UvrC-binding domain of UvrB"/>
    <property type="match status" value="1"/>
</dbReference>
<dbReference type="SUPFAM" id="SSF52540">
    <property type="entry name" value="P-loop containing nucleoside triphosphate hydrolases"/>
    <property type="match status" value="2"/>
</dbReference>
<dbReference type="PROSITE" id="PS51192">
    <property type="entry name" value="HELICASE_ATP_BIND_1"/>
    <property type="match status" value="1"/>
</dbReference>
<dbReference type="PROSITE" id="PS51194">
    <property type="entry name" value="HELICASE_CTER"/>
    <property type="match status" value="1"/>
</dbReference>
<dbReference type="PROSITE" id="PS50151">
    <property type="entry name" value="UVR"/>
    <property type="match status" value="1"/>
</dbReference>
<feature type="chain" id="PRO_0000227352" description="UvrABC system protein B">
    <location>
        <begin position="1"/>
        <end position="671"/>
    </location>
</feature>
<feature type="domain" description="Helicase ATP-binding" evidence="1">
    <location>
        <begin position="25"/>
        <end position="412"/>
    </location>
</feature>
<feature type="domain" description="Helicase C-terminal" evidence="1">
    <location>
        <begin position="429"/>
        <end position="582"/>
    </location>
</feature>
<feature type="domain" description="UVR" evidence="1">
    <location>
        <begin position="632"/>
        <end position="667"/>
    </location>
</feature>
<feature type="region of interest" description="Disordered" evidence="2">
    <location>
        <begin position="601"/>
        <end position="625"/>
    </location>
</feature>
<feature type="short sequence motif" description="Beta-hairpin">
    <location>
        <begin position="91"/>
        <end position="114"/>
    </location>
</feature>
<feature type="compositionally biased region" description="Basic and acidic residues" evidence="2">
    <location>
        <begin position="614"/>
        <end position="625"/>
    </location>
</feature>
<feature type="binding site" evidence="1">
    <location>
        <begin position="38"/>
        <end position="45"/>
    </location>
    <ligand>
        <name>ATP</name>
        <dbReference type="ChEBI" id="CHEBI:30616"/>
    </ligand>
</feature>